<gene>
    <name evidence="1" type="primary">acpP</name>
    <name type="ordered locus">Cpha266_2493</name>
</gene>
<evidence type="ECO:0000255" key="1">
    <source>
        <dbReference type="HAMAP-Rule" id="MF_01217"/>
    </source>
</evidence>
<evidence type="ECO:0000255" key="2">
    <source>
        <dbReference type="PROSITE-ProRule" id="PRU00258"/>
    </source>
</evidence>
<accession>A1BJA4</accession>
<comment type="function">
    <text evidence="1">Carrier of the growing fatty acid chain in fatty acid biosynthesis.</text>
</comment>
<comment type="pathway">
    <text evidence="1">Lipid metabolism; fatty acid biosynthesis.</text>
</comment>
<comment type="subcellular location">
    <subcellularLocation>
        <location evidence="1">Cytoplasm</location>
    </subcellularLocation>
</comment>
<comment type="PTM">
    <text evidence="1">4'-phosphopantetheine is transferred from CoA to a specific serine of apo-ACP by AcpS. This modification is essential for activity because fatty acids are bound in thioester linkage to the sulfhydryl of the prosthetic group.</text>
</comment>
<comment type="similarity">
    <text evidence="1">Belongs to the acyl carrier protein (ACP) family.</text>
</comment>
<name>ACP_CHLPD</name>
<reference key="1">
    <citation type="submission" date="2006-12" db="EMBL/GenBank/DDBJ databases">
        <title>Complete sequence of Chlorobium phaeobacteroides DSM 266.</title>
        <authorList>
            <consortium name="US DOE Joint Genome Institute"/>
            <person name="Copeland A."/>
            <person name="Lucas S."/>
            <person name="Lapidus A."/>
            <person name="Barry K."/>
            <person name="Detter J.C."/>
            <person name="Glavina del Rio T."/>
            <person name="Hammon N."/>
            <person name="Israni S."/>
            <person name="Pitluck S."/>
            <person name="Goltsman E."/>
            <person name="Schmutz J."/>
            <person name="Larimer F."/>
            <person name="Land M."/>
            <person name="Hauser L."/>
            <person name="Mikhailova N."/>
            <person name="Li T."/>
            <person name="Overmann J."/>
            <person name="Bryant D.A."/>
            <person name="Richardson P."/>
        </authorList>
    </citation>
    <scope>NUCLEOTIDE SEQUENCE [LARGE SCALE GENOMIC DNA]</scope>
    <source>
        <strain>DSM 266 / SMG 266 / 2430</strain>
    </source>
</reference>
<sequence length="78" mass="8864">MTEAQIKEKVYDIIVSKMGVNKDQIKPESKFSDDLGADSLDTVELIMELENEFDVQIPDEDAEKISTVQQAIDYIVKK</sequence>
<organism>
    <name type="scientific">Chlorobium phaeobacteroides (strain DSM 266 / SMG 266 / 2430)</name>
    <dbReference type="NCBI Taxonomy" id="290317"/>
    <lineage>
        <taxon>Bacteria</taxon>
        <taxon>Pseudomonadati</taxon>
        <taxon>Chlorobiota</taxon>
        <taxon>Chlorobiia</taxon>
        <taxon>Chlorobiales</taxon>
        <taxon>Chlorobiaceae</taxon>
        <taxon>Chlorobium/Pelodictyon group</taxon>
        <taxon>Chlorobium</taxon>
    </lineage>
</organism>
<proteinExistence type="inferred from homology"/>
<dbReference type="EMBL" id="CP000492">
    <property type="protein sequence ID" value="ABL66481.1"/>
    <property type="molecule type" value="Genomic_DNA"/>
</dbReference>
<dbReference type="RefSeq" id="WP_011746258.1">
    <property type="nucleotide sequence ID" value="NC_008639.1"/>
</dbReference>
<dbReference type="SMR" id="A1BJA4"/>
<dbReference type="STRING" id="290317.Cpha266_2493"/>
<dbReference type="KEGG" id="cph:Cpha266_2493"/>
<dbReference type="eggNOG" id="COG0236">
    <property type="taxonomic scope" value="Bacteria"/>
</dbReference>
<dbReference type="HOGENOM" id="CLU_108696_5_1_10"/>
<dbReference type="OrthoDB" id="9804551at2"/>
<dbReference type="UniPathway" id="UPA00094"/>
<dbReference type="Proteomes" id="UP000008701">
    <property type="component" value="Chromosome"/>
</dbReference>
<dbReference type="GO" id="GO:0005829">
    <property type="term" value="C:cytosol"/>
    <property type="evidence" value="ECO:0007669"/>
    <property type="project" value="TreeGrafter"/>
</dbReference>
<dbReference type="GO" id="GO:0016020">
    <property type="term" value="C:membrane"/>
    <property type="evidence" value="ECO:0007669"/>
    <property type="project" value="GOC"/>
</dbReference>
<dbReference type="GO" id="GO:0000035">
    <property type="term" value="F:acyl binding"/>
    <property type="evidence" value="ECO:0007669"/>
    <property type="project" value="TreeGrafter"/>
</dbReference>
<dbReference type="GO" id="GO:0000036">
    <property type="term" value="F:acyl carrier activity"/>
    <property type="evidence" value="ECO:0007669"/>
    <property type="project" value="UniProtKB-UniRule"/>
</dbReference>
<dbReference type="GO" id="GO:0009245">
    <property type="term" value="P:lipid A biosynthetic process"/>
    <property type="evidence" value="ECO:0007669"/>
    <property type="project" value="TreeGrafter"/>
</dbReference>
<dbReference type="FunFam" id="1.10.1200.10:FF:000001">
    <property type="entry name" value="Acyl carrier protein"/>
    <property type="match status" value="1"/>
</dbReference>
<dbReference type="Gene3D" id="1.10.1200.10">
    <property type="entry name" value="ACP-like"/>
    <property type="match status" value="1"/>
</dbReference>
<dbReference type="HAMAP" id="MF_01217">
    <property type="entry name" value="Acyl_carrier"/>
    <property type="match status" value="1"/>
</dbReference>
<dbReference type="InterPro" id="IPR003231">
    <property type="entry name" value="ACP"/>
</dbReference>
<dbReference type="InterPro" id="IPR036736">
    <property type="entry name" value="ACP-like_sf"/>
</dbReference>
<dbReference type="InterPro" id="IPR009081">
    <property type="entry name" value="PP-bd_ACP"/>
</dbReference>
<dbReference type="InterPro" id="IPR006162">
    <property type="entry name" value="Ppantetheine_attach_site"/>
</dbReference>
<dbReference type="NCBIfam" id="TIGR00517">
    <property type="entry name" value="acyl_carrier"/>
    <property type="match status" value="1"/>
</dbReference>
<dbReference type="NCBIfam" id="NF002148">
    <property type="entry name" value="PRK00982.1-2"/>
    <property type="match status" value="1"/>
</dbReference>
<dbReference type="NCBIfam" id="NF002149">
    <property type="entry name" value="PRK00982.1-3"/>
    <property type="match status" value="1"/>
</dbReference>
<dbReference type="NCBIfam" id="NF002150">
    <property type="entry name" value="PRK00982.1-4"/>
    <property type="match status" value="1"/>
</dbReference>
<dbReference type="NCBIfam" id="NF002151">
    <property type="entry name" value="PRK00982.1-5"/>
    <property type="match status" value="1"/>
</dbReference>
<dbReference type="PANTHER" id="PTHR20863">
    <property type="entry name" value="ACYL CARRIER PROTEIN"/>
    <property type="match status" value="1"/>
</dbReference>
<dbReference type="PANTHER" id="PTHR20863:SF76">
    <property type="entry name" value="CARRIER DOMAIN-CONTAINING PROTEIN"/>
    <property type="match status" value="1"/>
</dbReference>
<dbReference type="Pfam" id="PF00550">
    <property type="entry name" value="PP-binding"/>
    <property type="match status" value="1"/>
</dbReference>
<dbReference type="SUPFAM" id="SSF47336">
    <property type="entry name" value="ACP-like"/>
    <property type="match status" value="1"/>
</dbReference>
<dbReference type="PROSITE" id="PS50075">
    <property type="entry name" value="CARRIER"/>
    <property type="match status" value="1"/>
</dbReference>
<dbReference type="PROSITE" id="PS00012">
    <property type="entry name" value="PHOSPHOPANTETHEINE"/>
    <property type="match status" value="1"/>
</dbReference>
<keyword id="KW-0963">Cytoplasm</keyword>
<keyword id="KW-0275">Fatty acid biosynthesis</keyword>
<keyword id="KW-0276">Fatty acid metabolism</keyword>
<keyword id="KW-0444">Lipid biosynthesis</keyword>
<keyword id="KW-0443">Lipid metabolism</keyword>
<keyword id="KW-0596">Phosphopantetheine</keyword>
<keyword id="KW-0597">Phosphoprotein</keyword>
<keyword id="KW-1185">Reference proteome</keyword>
<feature type="chain" id="PRO_1000066588" description="Acyl carrier protein">
    <location>
        <begin position="1"/>
        <end position="78"/>
    </location>
</feature>
<feature type="domain" description="Carrier" evidence="2">
    <location>
        <begin position="4"/>
        <end position="78"/>
    </location>
</feature>
<feature type="modified residue" description="O-(pantetheine 4'-phosphoryl)serine" evidence="2">
    <location>
        <position position="39"/>
    </location>
</feature>
<protein>
    <recommendedName>
        <fullName evidence="1">Acyl carrier protein</fullName>
        <shortName evidence="1">ACP</shortName>
    </recommendedName>
</protein>